<evidence type="ECO:0000269" key="1">
    <source>
    </source>
</evidence>
<evidence type="ECO:0000269" key="2">
    <source>
    </source>
</evidence>
<gene>
    <name type="primary">kms2</name>
    <name type="ORF">SPBC947.12</name>
</gene>
<sequence length="457" mass="53246">MDEYIPFDDIVRQYDPDYTGKVSIQAFLEIVDDVDALRLNPEAPLLDNEQRQSAQDFIKDNSEIVVSTSEIKNLFYELTGLDPDTLPVNKLALRENGVLPRKSVAKPQKISENRIKRKDMFYQDASYITPRKGSPLSHSTPLSMFRTKNEYGSNKGFSHINKENADDSLIQQLYERIELQAAELRSKDEQVKELNARNAKLLEELDSSEEACKSCYTQAKTWEKKFREALRDSKEYAAQLQTIHEEYEQQQAHIVRMEELIHAVEKERKTETDYMKKESLSEQKERGAFMESNMILEEKVAHLQLENEQLRLFFKEKAPQPFQNHPPYQNLKITFPSPFFHIPYIPKTETLNDSQFAAGLSLLASELESQKNLLKKFENLKKKSSKDFLSPSTILSNAFSKVSLPNSLILRVLFFSLLFIIGIHIFYFLFFHVATIQQWPFLFWLPSTKFDNRWSPT</sequence>
<name>KMS2_SCHPO</name>
<reference key="1">
    <citation type="journal article" date="2002" name="Nature">
        <title>The genome sequence of Schizosaccharomyces pombe.</title>
        <authorList>
            <person name="Wood V."/>
            <person name="Gwilliam R."/>
            <person name="Rajandream M.A."/>
            <person name="Lyne M.H."/>
            <person name="Lyne R."/>
            <person name="Stewart A."/>
            <person name="Sgouros J.G."/>
            <person name="Peat N."/>
            <person name="Hayles J."/>
            <person name="Baker S.G."/>
            <person name="Basham D."/>
            <person name="Bowman S."/>
            <person name="Brooks K."/>
            <person name="Brown D."/>
            <person name="Brown S."/>
            <person name="Chillingworth T."/>
            <person name="Churcher C.M."/>
            <person name="Collins M."/>
            <person name="Connor R."/>
            <person name="Cronin A."/>
            <person name="Davis P."/>
            <person name="Feltwell T."/>
            <person name="Fraser A."/>
            <person name="Gentles S."/>
            <person name="Goble A."/>
            <person name="Hamlin N."/>
            <person name="Harris D.E."/>
            <person name="Hidalgo J."/>
            <person name="Hodgson G."/>
            <person name="Holroyd S."/>
            <person name="Hornsby T."/>
            <person name="Howarth S."/>
            <person name="Huckle E.J."/>
            <person name="Hunt S."/>
            <person name="Jagels K."/>
            <person name="James K.D."/>
            <person name="Jones L."/>
            <person name="Jones M."/>
            <person name="Leather S."/>
            <person name="McDonald S."/>
            <person name="McLean J."/>
            <person name="Mooney P."/>
            <person name="Moule S."/>
            <person name="Mungall K.L."/>
            <person name="Murphy L.D."/>
            <person name="Niblett D."/>
            <person name="Odell C."/>
            <person name="Oliver K."/>
            <person name="O'Neil S."/>
            <person name="Pearson D."/>
            <person name="Quail M.A."/>
            <person name="Rabbinowitsch E."/>
            <person name="Rutherford K.M."/>
            <person name="Rutter S."/>
            <person name="Saunders D."/>
            <person name="Seeger K."/>
            <person name="Sharp S."/>
            <person name="Skelton J."/>
            <person name="Simmonds M.N."/>
            <person name="Squares R."/>
            <person name="Squares S."/>
            <person name="Stevens K."/>
            <person name="Taylor K."/>
            <person name="Taylor R.G."/>
            <person name="Tivey A."/>
            <person name="Walsh S.V."/>
            <person name="Warren T."/>
            <person name="Whitehead S."/>
            <person name="Woodward J.R."/>
            <person name="Volckaert G."/>
            <person name="Aert R."/>
            <person name="Robben J."/>
            <person name="Grymonprez B."/>
            <person name="Weltjens I."/>
            <person name="Vanstreels E."/>
            <person name="Rieger M."/>
            <person name="Schaefer M."/>
            <person name="Mueller-Auer S."/>
            <person name="Gabel C."/>
            <person name="Fuchs M."/>
            <person name="Duesterhoeft A."/>
            <person name="Fritzc C."/>
            <person name="Holzer E."/>
            <person name="Moestl D."/>
            <person name="Hilbert H."/>
            <person name="Borzym K."/>
            <person name="Langer I."/>
            <person name="Beck A."/>
            <person name="Lehrach H."/>
            <person name="Reinhardt R."/>
            <person name="Pohl T.M."/>
            <person name="Eger P."/>
            <person name="Zimmermann W."/>
            <person name="Wedler H."/>
            <person name="Wambutt R."/>
            <person name="Purnelle B."/>
            <person name="Goffeau A."/>
            <person name="Cadieu E."/>
            <person name="Dreano S."/>
            <person name="Gloux S."/>
            <person name="Lelaure V."/>
            <person name="Mottier S."/>
            <person name="Galibert F."/>
            <person name="Aves S.J."/>
            <person name="Xiang Z."/>
            <person name="Hunt C."/>
            <person name="Moore K."/>
            <person name="Hurst S.M."/>
            <person name="Lucas M."/>
            <person name="Rochet M."/>
            <person name="Gaillardin C."/>
            <person name="Tallada V.A."/>
            <person name="Garzon A."/>
            <person name="Thode G."/>
            <person name="Daga R.R."/>
            <person name="Cruzado L."/>
            <person name="Jimenez J."/>
            <person name="Sanchez M."/>
            <person name="del Rey F."/>
            <person name="Benito J."/>
            <person name="Dominguez A."/>
            <person name="Revuelta J.L."/>
            <person name="Moreno S."/>
            <person name="Armstrong J."/>
            <person name="Forsburg S.L."/>
            <person name="Cerutti L."/>
            <person name="Lowe T."/>
            <person name="McCombie W.R."/>
            <person name="Paulsen I."/>
            <person name="Potashkin J."/>
            <person name="Shpakovski G.V."/>
            <person name="Ussery D."/>
            <person name="Barrell B.G."/>
            <person name="Nurse P."/>
        </authorList>
    </citation>
    <scope>NUCLEOTIDE SEQUENCE [LARGE SCALE GENOMIC DNA]</scope>
    <source>
        <strain>972 / ATCC 24843</strain>
    </source>
</reference>
<reference key="2">
    <citation type="submission" date="2001-02" db="EMBL/GenBank/DDBJ databases">
        <authorList>
            <person name="Shimanuki M."/>
            <person name="Miki F."/>
            <person name="Ding D.-Q."/>
            <person name="Hiraoka Y."/>
            <person name="Niwa O."/>
        </authorList>
    </citation>
    <scope>NUCLEOTIDE SEQUENCE [GENOMIC DNA]</scope>
</reference>
<reference key="3">
    <citation type="journal article" date="2000" name="Genes Cells">
        <title>Large-scale screening of intracellular protein localization in living fission yeast cells by the use of a GFP-fusion genomic DNA library.</title>
        <authorList>
            <person name="Ding D.-Q."/>
            <person name="Tomita Y."/>
            <person name="Yamamoto A."/>
            <person name="Chikashige Y."/>
            <person name="Haraguchi T."/>
            <person name="Hiraoka Y."/>
        </authorList>
    </citation>
    <scope>NUCLEOTIDE SEQUENCE [LARGE SCALE GENOMIC DNA] OF 22-153</scope>
    <scope>SUBCELLULAR LOCATION</scope>
    <source>
        <strain>ATCC 38364 / 968</strain>
    </source>
</reference>
<reference key="4">
    <citation type="journal article" date="2004" name="Mol. Genet. Genomics">
        <title>Two-hybrid search for proteins that interact with Sad1 and Kms1, two membrane-bound components of the spindle pole body in fission yeast.</title>
        <authorList>
            <person name="Miki F."/>
            <person name="Kurabayashi A."/>
            <person name="Tange Y."/>
            <person name="Okazaki K."/>
            <person name="Shimanuki M."/>
            <person name="Niwa O."/>
        </authorList>
    </citation>
    <scope>INTERACTION WITH SAD1</scope>
    <scope>SUBCELLULAR LOCATION</scope>
</reference>
<reference key="5">
    <citation type="journal article" date="2008" name="J. Proteome Res.">
        <title>Phosphoproteome analysis of fission yeast.</title>
        <authorList>
            <person name="Wilson-Grady J.T."/>
            <person name="Villen J."/>
            <person name="Gygi S.P."/>
        </authorList>
    </citation>
    <scope>PHOSPHORYLATION [LARGE SCALE ANALYSIS] AT SER-134</scope>
    <scope>IDENTIFICATION BY MASS SPECTROMETRY</scope>
</reference>
<accession>O43087</accession>
<accession>Q9UU62</accession>
<dbReference type="EMBL" id="CU329671">
    <property type="protein sequence ID" value="CAA17040.1"/>
    <property type="molecule type" value="Genomic_DNA"/>
</dbReference>
<dbReference type="EMBL" id="AB055901">
    <property type="protein sequence ID" value="BAB32792.1"/>
    <property type="molecule type" value="Genomic_DNA"/>
</dbReference>
<dbReference type="EMBL" id="AB027793">
    <property type="protein sequence ID" value="BAA87097.1"/>
    <property type="molecule type" value="Genomic_DNA"/>
</dbReference>
<dbReference type="PIR" id="T40770">
    <property type="entry name" value="T40770"/>
</dbReference>
<dbReference type="RefSeq" id="NP_595264.1">
    <property type="nucleotide sequence ID" value="NM_001021171.2"/>
</dbReference>
<dbReference type="SMR" id="O43087"/>
<dbReference type="BioGRID" id="277761">
    <property type="interactions" value="13"/>
</dbReference>
<dbReference type="IntAct" id="O43087">
    <property type="interactions" value="1"/>
</dbReference>
<dbReference type="STRING" id="284812.O43087"/>
<dbReference type="iPTMnet" id="O43087"/>
<dbReference type="PaxDb" id="4896-SPBC947.12.1"/>
<dbReference type="EnsemblFungi" id="SPBC947.12.1">
    <property type="protein sequence ID" value="SPBC947.12.1:pep"/>
    <property type="gene ID" value="SPBC947.12"/>
</dbReference>
<dbReference type="GeneID" id="2541247"/>
<dbReference type="KEGG" id="spo:2541247"/>
<dbReference type="PomBase" id="SPBC947.12">
    <property type="gene designation" value="kms2"/>
</dbReference>
<dbReference type="VEuPathDB" id="FungiDB:SPBC947.12"/>
<dbReference type="HOGENOM" id="CLU_593331_0_0_1"/>
<dbReference type="InParanoid" id="O43087"/>
<dbReference type="OMA" id="ACKSCYT"/>
<dbReference type="PhylomeDB" id="O43087"/>
<dbReference type="PRO" id="PR:O43087"/>
<dbReference type="Proteomes" id="UP000002485">
    <property type="component" value="Chromosome II"/>
</dbReference>
<dbReference type="GO" id="GO:0005737">
    <property type="term" value="C:cytoplasm"/>
    <property type="evidence" value="ECO:0007005"/>
    <property type="project" value="PomBase"/>
</dbReference>
<dbReference type="GO" id="GO:0061496">
    <property type="term" value="C:half bridge of mitotic spindle pole body"/>
    <property type="evidence" value="ECO:0000314"/>
    <property type="project" value="PomBase"/>
</dbReference>
<dbReference type="GO" id="GO:0034993">
    <property type="term" value="C:meiotic nuclear membrane microtubule tethering complex"/>
    <property type="evidence" value="ECO:0000353"/>
    <property type="project" value="PomBase"/>
</dbReference>
<dbReference type="GO" id="GO:0044732">
    <property type="term" value="C:mitotic spindle pole body"/>
    <property type="evidence" value="ECO:0000314"/>
    <property type="project" value="PomBase"/>
</dbReference>
<dbReference type="GO" id="GO:0005634">
    <property type="term" value="C:nucleus"/>
    <property type="evidence" value="ECO:0007005"/>
    <property type="project" value="PomBase"/>
</dbReference>
<dbReference type="GO" id="GO:0071957">
    <property type="term" value="C:old mitotic spindle pole body"/>
    <property type="evidence" value="ECO:0000314"/>
    <property type="project" value="PomBase"/>
</dbReference>
<dbReference type="GO" id="GO:0106166">
    <property type="term" value="F:spindle pole body-nuclear membrane anchor activity"/>
    <property type="evidence" value="ECO:0000269"/>
    <property type="project" value="PomBase"/>
</dbReference>
<dbReference type="GO" id="GO:0051301">
    <property type="term" value="P:cell division"/>
    <property type="evidence" value="ECO:0007669"/>
    <property type="project" value="UniProtKB-KW"/>
</dbReference>
<dbReference type="GO" id="GO:0051321">
    <property type="term" value="P:meiotic cell cycle"/>
    <property type="evidence" value="ECO:0007669"/>
    <property type="project" value="UniProtKB-KW"/>
</dbReference>
<dbReference type="GO" id="GO:1903087">
    <property type="term" value="P:mitotic spindle pole body duplication"/>
    <property type="evidence" value="ECO:0000315"/>
    <property type="project" value="PomBase"/>
</dbReference>
<dbReference type="GO" id="GO:0140480">
    <property type="term" value="P:mitotic spindle pole body insertion into the nuclear envelope"/>
    <property type="evidence" value="ECO:0000315"/>
    <property type="project" value="PomBase"/>
</dbReference>
<dbReference type="InterPro" id="IPR030268">
    <property type="entry name" value="SYNE4"/>
</dbReference>
<dbReference type="PANTHER" id="PTHR21640">
    <property type="match status" value="1"/>
</dbReference>
<dbReference type="PANTHER" id="PTHR21640:SF1">
    <property type="entry name" value="NESPRIN-4"/>
    <property type="match status" value="1"/>
</dbReference>
<proteinExistence type="evidence at protein level"/>
<protein>
    <recommendedName>
        <fullName>Karyogamy meiotic segregation protein 2</fullName>
    </recommendedName>
</protein>
<comment type="subunit">
    <text evidence="1">Interacts with sad1.</text>
</comment>
<comment type="subcellular location">
    <subcellularLocation>
        <location>Cytoplasm</location>
        <location>Cytoskeleton</location>
        <location>Microtubule organizing center</location>
        <location>Spindle pole body</location>
    </subcellularLocation>
    <subcellularLocation>
        <location>Cytoplasm</location>
    </subcellularLocation>
    <text>Associates with the spindle pole body (SPB).</text>
</comment>
<feature type="chain" id="PRO_0000084311" description="Karyogamy meiotic segregation protein 2">
    <location>
        <begin position="1"/>
        <end position="457"/>
    </location>
</feature>
<feature type="modified residue" description="Phosphoserine" evidence="2">
    <location>
        <position position="134"/>
    </location>
</feature>
<organism>
    <name type="scientific">Schizosaccharomyces pombe (strain 972 / ATCC 24843)</name>
    <name type="common">Fission yeast</name>
    <dbReference type="NCBI Taxonomy" id="284812"/>
    <lineage>
        <taxon>Eukaryota</taxon>
        <taxon>Fungi</taxon>
        <taxon>Dikarya</taxon>
        <taxon>Ascomycota</taxon>
        <taxon>Taphrinomycotina</taxon>
        <taxon>Schizosaccharomycetes</taxon>
        <taxon>Schizosaccharomycetales</taxon>
        <taxon>Schizosaccharomycetaceae</taxon>
        <taxon>Schizosaccharomyces</taxon>
    </lineage>
</organism>
<keyword id="KW-0131">Cell cycle</keyword>
<keyword id="KW-0132">Cell division</keyword>
<keyword id="KW-0963">Cytoplasm</keyword>
<keyword id="KW-0206">Cytoskeleton</keyword>
<keyword id="KW-0469">Meiosis</keyword>
<keyword id="KW-0597">Phosphoprotein</keyword>
<keyword id="KW-1185">Reference proteome</keyword>